<name>HSC90_DICDI</name>
<organism>
    <name type="scientific">Dictyostelium discoideum</name>
    <name type="common">Social amoeba</name>
    <dbReference type="NCBI Taxonomy" id="44689"/>
    <lineage>
        <taxon>Eukaryota</taxon>
        <taxon>Amoebozoa</taxon>
        <taxon>Evosea</taxon>
        <taxon>Eumycetozoa</taxon>
        <taxon>Dictyostelia</taxon>
        <taxon>Dictyosteliales</taxon>
        <taxon>Dictyosteliaceae</taxon>
        <taxon>Dictyostelium</taxon>
    </lineage>
</organism>
<sequence>MAESQVERFTFQAEINQLMSLIINTFYSNKEVFLRELISNASDALDKIRYQSLTDASVLESKTELEIKIIPDKTAKTLTLIDSGIGMTKTDMVKNLGTIARSGTKNFMEQLQSGAADISMIGQFGVGFYSAYLVADTVIVHSKNNDDEQYVWESSAGGEFTIALDHTEPLGRGTKIVLHMKEDQLDYLDETKIKNLVKKHSEFIQYPISLLTIKEKEVDEETTAKEGEEESTDAKIEEIEEEKEKKKVKVQEKEWDVLNKTKPLWTRNPSDVTKEEYNSFYKSISNDWEEPLAVKHFSVEGQLEFKAILFVPKKAPFDLFESKKKANNIKLYVKRVFIMDNCADIIPEYLNFVRGIVDSEDLPLNISRETLQQNKILTVIRKNLVKKCIELFNEIAENSEDYKKFYEAFSKNLKLGVHEDSQNREKFADLLRYQTSKSGDELVTLKEYVGRMKEGQNEIYYITGESKKAVENSPFIEGLKKKNLEVIYMCDPIDEYAVQQLKEYDGKKLVSITKEGLKLDETEDEKKKAEQDKAANEELLKQVKDVLGDKVEKVVLSTRLANSPCVLVTSEYGWSANMERIMKAQALRDSSMSSYMSSKKTLELNPDHPIVRDLAKKAAEKSKTFKDFVYLLYETALLTSGFSLDEPSSFASRIHRMIKLGLSIQDDSSATTEESTNTTTSDDIPPLEENDEPSEMEKVD</sequence>
<comment type="function">
    <text evidence="1">Molecular chaperone that promotes the maturation, structural maintenance and proper regulation of specific target proteins involved for instance in cell cycle control and signal transduction. Undergoes a functional cycle that is linked to its ATPase activity. This cycle probably induces conformational changes in the client proteins, thereby causing their activation. Interacts dynamically with various co-chaperones that modulate its substrate recognition, ATPase cycle and chaperone function (By similarity).</text>
</comment>
<comment type="subunit">
    <text evidence="1">Homodimer.</text>
</comment>
<comment type="subcellular location">
    <subcellularLocation>
        <location evidence="3">Cytoplasm</location>
    </subcellularLocation>
</comment>
<comment type="domain">
    <text evidence="1">The TPR repeat-binding motif mediates interaction with TPR repeat-containing proteins.</text>
</comment>
<comment type="similarity">
    <text evidence="3">Belongs to the heat shock protein 90 family.</text>
</comment>
<accession>P54651</accession>
<accession>Q55FQ1</accession>
<keyword id="KW-0002">3D-structure</keyword>
<keyword id="KW-0067">ATP-binding</keyword>
<keyword id="KW-0143">Chaperone</keyword>
<keyword id="KW-0963">Cytoplasm</keyword>
<keyword id="KW-0547">Nucleotide-binding</keyword>
<keyword id="KW-1185">Reference proteome</keyword>
<keyword id="KW-0346">Stress response</keyword>
<evidence type="ECO:0000250" key="1"/>
<evidence type="ECO:0000256" key="2">
    <source>
        <dbReference type="SAM" id="MobiDB-lite"/>
    </source>
</evidence>
<evidence type="ECO:0000305" key="3"/>
<evidence type="ECO:0007829" key="4">
    <source>
        <dbReference type="PDB" id="4XE2"/>
    </source>
</evidence>
<evidence type="ECO:0007829" key="5">
    <source>
        <dbReference type="PDB" id="4XKA"/>
    </source>
</evidence>
<proteinExistence type="evidence at protein level"/>
<protein>
    <recommendedName>
        <fullName>Heat shock cognate 90 kDa protein</fullName>
    </recommendedName>
</protein>
<dbReference type="EMBL" id="L43591">
    <property type="protein sequence ID" value="AAA69917.1"/>
    <property type="molecule type" value="mRNA"/>
</dbReference>
<dbReference type="EMBL" id="AAFI02000003">
    <property type="protein sequence ID" value="EAL73152.1"/>
    <property type="molecule type" value="Genomic_DNA"/>
</dbReference>
<dbReference type="RefSeq" id="XP_647482.1">
    <property type="nucleotide sequence ID" value="XM_642390.1"/>
</dbReference>
<dbReference type="PDB" id="4XC0">
    <property type="method" value="X-ray"/>
    <property type="resolution" value="1.77 A"/>
    <property type="chains" value="A=1-223"/>
</dbReference>
<dbReference type="PDB" id="4XCJ">
    <property type="method" value="X-ray"/>
    <property type="resolution" value="1.75 A"/>
    <property type="chains" value="A=1-223"/>
</dbReference>
<dbReference type="PDB" id="4XCL">
    <property type="method" value="X-ray"/>
    <property type="resolution" value="1.21 A"/>
    <property type="chains" value="A=1-223"/>
</dbReference>
<dbReference type="PDB" id="4XD8">
    <property type="method" value="X-ray"/>
    <property type="resolution" value="1.55 A"/>
    <property type="chains" value="A=1-223"/>
</dbReference>
<dbReference type="PDB" id="4XDM">
    <property type="method" value="X-ray"/>
    <property type="resolution" value="1.50 A"/>
    <property type="chains" value="A=1-223"/>
</dbReference>
<dbReference type="PDB" id="4XE2">
    <property type="method" value="X-ray"/>
    <property type="resolution" value="1.20 A"/>
    <property type="chains" value="A=1-223"/>
</dbReference>
<dbReference type="PDB" id="4XKA">
    <property type="method" value="X-ray"/>
    <property type="resolution" value="2.00 A"/>
    <property type="chains" value="A=1-223"/>
</dbReference>
<dbReference type="PDB" id="4XKK">
    <property type="method" value="X-ray"/>
    <property type="resolution" value="2.70 A"/>
    <property type="chains" value="A=1-223"/>
</dbReference>
<dbReference type="PDB" id="4XKO">
    <property type="method" value="X-ray"/>
    <property type="resolution" value="2.46 A"/>
    <property type="chains" value="A=1-223"/>
</dbReference>
<dbReference type="PDBsum" id="4XC0"/>
<dbReference type="PDBsum" id="4XCJ"/>
<dbReference type="PDBsum" id="4XCL"/>
<dbReference type="PDBsum" id="4XD8"/>
<dbReference type="PDBsum" id="4XDM"/>
<dbReference type="PDBsum" id="4XE2"/>
<dbReference type="PDBsum" id="4XKA"/>
<dbReference type="PDBsum" id="4XKK"/>
<dbReference type="PDBsum" id="4XKO"/>
<dbReference type="SMR" id="P54651"/>
<dbReference type="FunCoup" id="P54651">
    <property type="interactions" value="581"/>
</dbReference>
<dbReference type="IntAct" id="P54651">
    <property type="interactions" value="2"/>
</dbReference>
<dbReference type="STRING" id="44689.P54651"/>
<dbReference type="PaxDb" id="44689-DDB0191163"/>
<dbReference type="EnsemblProtists" id="EAL73152">
    <property type="protein sequence ID" value="EAL73152"/>
    <property type="gene ID" value="DDB_G0267400"/>
</dbReference>
<dbReference type="GeneID" id="8616289"/>
<dbReference type="KEGG" id="ddi:DDB_G0267400"/>
<dbReference type="dictyBase" id="DDB_G0267400">
    <property type="gene designation" value="hspD"/>
</dbReference>
<dbReference type="VEuPathDB" id="AmoebaDB:DDB_G0267400"/>
<dbReference type="eggNOG" id="KOG0019">
    <property type="taxonomic scope" value="Eukaryota"/>
</dbReference>
<dbReference type="HOGENOM" id="CLU_006684_1_3_1"/>
<dbReference type="InParanoid" id="P54651"/>
<dbReference type="OMA" id="TRMKAEQ"/>
<dbReference type="PhylomeDB" id="P54651"/>
<dbReference type="Reactome" id="R-DDI-1474151">
    <property type="pathway name" value="Tetrahydrobiopterin (BH4) synthesis, recycling, salvage and regulation"/>
</dbReference>
<dbReference type="Reactome" id="R-DDI-2029482">
    <property type="pathway name" value="Regulation of actin dynamics for phagocytic cup formation"/>
</dbReference>
<dbReference type="Reactome" id="R-DDI-203615">
    <property type="pathway name" value="eNOS activation"/>
</dbReference>
<dbReference type="Reactome" id="R-DDI-3371497">
    <property type="pathway name" value="HSP90 chaperone cycle for steroid hormone receptors (SHR) in the presence of ligand"/>
</dbReference>
<dbReference type="Reactome" id="R-DDI-3371511">
    <property type="pathway name" value="HSF1 activation"/>
</dbReference>
<dbReference type="Reactome" id="R-DDI-3371571">
    <property type="pathway name" value="HSF1-dependent transactivation"/>
</dbReference>
<dbReference type="Reactome" id="R-DDI-399954">
    <property type="pathway name" value="Sema3A PAK dependent Axon repulsion"/>
</dbReference>
<dbReference type="Reactome" id="R-DDI-5218920">
    <property type="pathway name" value="VEGFR2 mediated vascular permeability"/>
</dbReference>
<dbReference type="Reactome" id="R-DDI-6798695">
    <property type="pathway name" value="Neutrophil degranulation"/>
</dbReference>
<dbReference type="Reactome" id="R-DDI-844456">
    <property type="pathway name" value="The NLRP3 inflammasome"/>
</dbReference>
<dbReference type="Reactome" id="R-DDI-8937144">
    <property type="pathway name" value="Aryl hydrocarbon receptor signalling"/>
</dbReference>
<dbReference type="Reactome" id="R-DDI-9009391">
    <property type="pathway name" value="Extra-nuclear estrogen signaling"/>
</dbReference>
<dbReference type="EvolutionaryTrace" id="P54651"/>
<dbReference type="PRO" id="PR:P54651"/>
<dbReference type="Proteomes" id="UP000002195">
    <property type="component" value="Chromosome 1"/>
</dbReference>
<dbReference type="GO" id="GO:0005829">
    <property type="term" value="C:cytosol"/>
    <property type="evidence" value="ECO:0000314"/>
    <property type="project" value="dictyBase"/>
</dbReference>
<dbReference type="GO" id="GO:0031012">
    <property type="term" value="C:extracellular matrix"/>
    <property type="evidence" value="ECO:0007005"/>
    <property type="project" value="dictyBase"/>
</dbReference>
<dbReference type="GO" id="GO:0048471">
    <property type="term" value="C:perinuclear region of cytoplasm"/>
    <property type="evidence" value="ECO:0000318"/>
    <property type="project" value="GO_Central"/>
</dbReference>
<dbReference type="GO" id="GO:0045335">
    <property type="term" value="C:phagocytic vesicle"/>
    <property type="evidence" value="ECO:0007005"/>
    <property type="project" value="dictyBase"/>
</dbReference>
<dbReference type="GO" id="GO:0005886">
    <property type="term" value="C:plasma membrane"/>
    <property type="evidence" value="ECO:0000318"/>
    <property type="project" value="GO_Central"/>
</dbReference>
<dbReference type="GO" id="GO:0032991">
    <property type="term" value="C:protein-containing complex"/>
    <property type="evidence" value="ECO:0000318"/>
    <property type="project" value="GO_Central"/>
</dbReference>
<dbReference type="GO" id="GO:0005524">
    <property type="term" value="F:ATP binding"/>
    <property type="evidence" value="ECO:0000318"/>
    <property type="project" value="GO_Central"/>
</dbReference>
<dbReference type="GO" id="GO:0016887">
    <property type="term" value="F:ATP hydrolysis activity"/>
    <property type="evidence" value="ECO:0000318"/>
    <property type="project" value="GO_Central"/>
</dbReference>
<dbReference type="GO" id="GO:0140662">
    <property type="term" value="F:ATP-dependent protein folding chaperone"/>
    <property type="evidence" value="ECO:0007669"/>
    <property type="project" value="InterPro"/>
</dbReference>
<dbReference type="GO" id="GO:0051082">
    <property type="term" value="F:unfolded protein binding"/>
    <property type="evidence" value="ECO:0000318"/>
    <property type="project" value="GO_Central"/>
</dbReference>
<dbReference type="GO" id="GO:0034605">
    <property type="term" value="P:cellular response to heat"/>
    <property type="evidence" value="ECO:0000318"/>
    <property type="project" value="GO_Central"/>
</dbReference>
<dbReference type="GO" id="GO:0006457">
    <property type="term" value="P:protein folding"/>
    <property type="evidence" value="ECO:0000318"/>
    <property type="project" value="GO_Central"/>
</dbReference>
<dbReference type="GO" id="GO:0050821">
    <property type="term" value="P:protein stabilization"/>
    <property type="evidence" value="ECO:0000315"/>
    <property type="project" value="dictyBase"/>
</dbReference>
<dbReference type="GO" id="GO:0060176">
    <property type="term" value="P:regulation of aggregation involved in sorocarp development"/>
    <property type="evidence" value="ECO:0000315"/>
    <property type="project" value="dictyBase"/>
</dbReference>
<dbReference type="CDD" id="cd16927">
    <property type="entry name" value="HATPase_Hsp90-like"/>
    <property type="match status" value="1"/>
</dbReference>
<dbReference type="FunFam" id="1.20.120.790:FF:000001">
    <property type="entry name" value="Heat shock protein 90 alpha"/>
    <property type="match status" value="1"/>
</dbReference>
<dbReference type="FunFam" id="3.30.230.80:FF:000001">
    <property type="entry name" value="Heat shock protein 90 alpha"/>
    <property type="match status" value="1"/>
</dbReference>
<dbReference type="FunFam" id="3.40.50.11260:FF:000001">
    <property type="entry name" value="Heat shock protein 90 alpha"/>
    <property type="match status" value="1"/>
</dbReference>
<dbReference type="FunFam" id="3.30.565.10:FF:000001">
    <property type="entry name" value="Heat shock protein HSP 90-alpha"/>
    <property type="match status" value="1"/>
</dbReference>
<dbReference type="Gene3D" id="3.30.230.80">
    <property type="match status" value="1"/>
</dbReference>
<dbReference type="Gene3D" id="3.40.50.11260">
    <property type="match status" value="1"/>
</dbReference>
<dbReference type="Gene3D" id="1.20.120.790">
    <property type="entry name" value="Heat shock protein 90, C-terminal domain"/>
    <property type="match status" value="1"/>
</dbReference>
<dbReference type="Gene3D" id="3.30.565.10">
    <property type="entry name" value="Histidine kinase-like ATPase, C-terminal domain"/>
    <property type="match status" value="1"/>
</dbReference>
<dbReference type="HAMAP" id="MF_00505">
    <property type="entry name" value="HSP90"/>
    <property type="match status" value="1"/>
</dbReference>
<dbReference type="InterPro" id="IPR036890">
    <property type="entry name" value="HATPase_C_sf"/>
</dbReference>
<dbReference type="InterPro" id="IPR019805">
    <property type="entry name" value="Heat_shock_protein_90_CS"/>
</dbReference>
<dbReference type="InterPro" id="IPR037196">
    <property type="entry name" value="HSP90_C"/>
</dbReference>
<dbReference type="InterPro" id="IPR001404">
    <property type="entry name" value="Hsp90_fam"/>
</dbReference>
<dbReference type="InterPro" id="IPR020575">
    <property type="entry name" value="Hsp90_N"/>
</dbReference>
<dbReference type="InterPro" id="IPR020568">
    <property type="entry name" value="Ribosomal_Su5_D2-typ_SF"/>
</dbReference>
<dbReference type="NCBIfam" id="NF003555">
    <property type="entry name" value="PRK05218.1"/>
    <property type="match status" value="1"/>
</dbReference>
<dbReference type="PANTHER" id="PTHR11528">
    <property type="entry name" value="HEAT SHOCK PROTEIN 90 FAMILY MEMBER"/>
    <property type="match status" value="1"/>
</dbReference>
<dbReference type="Pfam" id="PF02518">
    <property type="entry name" value="HATPase_c"/>
    <property type="match status" value="1"/>
</dbReference>
<dbReference type="Pfam" id="PF00183">
    <property type="entry name" value="HSP90"/>
    <property type="match status" value="1"/>
</dbReference>
<dbReference type="PIRSF" id="PIRSF002583">
    <property type="entry name" value="Hsp90"/>
    <property type="match status" value="1"/>
</dbReference>
<dbReference type="PRINTS" id="PR00775">
    <property type="entry name" value="HEATSHOCK90"/>
</dbReference>
<dbReference type="SMART" id="SM00387">
    <property type="entry name" value="HATPase_c"/>
    <property type="match status" value="1"/>
</dbReference>
<dbReference type="SUPFAM" id="SSF55874">
    <property type="entry name" value="ATPase domain of HSP90 chaperone/DNA topoisomerase II/histidine kinase"/>
    <property type="match status" value="1"/>
</dbReference>
<dbReference type="SUPFAM" id="SSF110942">
    <property type="entry name" value="HSP90 C-terminal domain"/>
    <property type="match status" value="1"/>
</dbReference>
<dbReference type="SUPFAM" id="SSF54211">
    <property type="entry name" value="Ribosomal protein S5 domain 2-like"/>
    <property type="match status" value="1"/>
</dbReference>
<dbReference type="PROSITE" id="PS00298">
    <property type="entry name" value="HSP90"/>
    <property type="match status" value="1"/>
</dbReference>
<feature type="chain" id="PRO_0000062928" description="Heat shock cognate 90 kDa protein">
    <location>
        <begin position="1"/>
        <end position="700"/>
    </location>
</feature>
<feature type="region of interest" description="Disordered" evidence="2">
    <location>
        <begin position="665"/>
        <end position="700"/>
    </location>
</feature>
<feature type="short sequence motif" description="TPR repeat-binding">
    <location>
        <begin position="696"/>
        <end position="700"/>
    </location>
</feature>
<feature type="compositionally biased region" description="Low complexity" evidence="2">
    <location>
        <begin position="666"/>
        <end position="683"/>
    </location>
</feature>
<feature type="compositionally biased region" description="Acidic residues" evidence="2">
    <location>
        <begin position="685"/>
        <end position="694"/>
    </location>
</feature>
<feature type="binding site" evidence="1">
    <location>
        <position position="40"/>
    </location>
    <ligand>
        <name>ATP</name>
        <dbReference type="ChEBI" id="CHEBI:30616"/>
    </ligand>
</feature>
<feature type="binding site" evidence="1">
    <location>
        <position position="82"/>
    </location>
    <ligand>
        <name>ATP</name>
        <dbReference type="ChEBI" id="CHEBI:30616"/>
    </ligand>
</feature>
<feature type="binding site" evidence="1">
    <location>
        <position position="95"/>
    </location>
    <ligand>
        <name>ATP</name>
        <dbReference type="ChEBI" id="CHEBI:30616"/>
    </ligand>
</feature>
<feature type="binding site" evidence="1">
    <location>
        <position position="128"/>
    </location>
    <ligand>
        <name>ATP</name>
        <dbReference type="ChEBI" id="CHEBI:30616"/>
    </ligand>
</feature>
<feature type="binding site" evidence="1">
    <location>
        <position position="368"/>
    </location>
    <ligand>
        <name>ATP</name>
        <dbReference type="ChEBI" id="CHEBI:30616"/>
    </ligand>
</feature>
<feature type="sequence conflict" description="In Ref. 1; AAA69917." evidence="3" ref="1">
    <original>A</original>
    <variation>S</variation>
    <location>
        <position position="670"/>
    </location>
</feature>
<feature type="strand" evidence="4">
    <location>
        <begin position="6"/>
        <end position="10"/>
    </location>
</feature>
<feature type="helix" evidence="4">
    <location>
        <begin position="13"/>
        <end position="23"/>
    </location>
</feature>
<feature type="helix" evidence="4">
    <location>
        <begin position="32"/>
        <end position="54"/>
    </location>
</feature>
<feature type="helix" evidence="4">
    <location>
        <begin position="56"/>
        <end position="59"/>
    </location>
</feature>
<feature type="strand" evidence="4">
    <location>
        <begin position="67"/>
        <end position="72"/>
    </location>
</feature>
<feature type="turn" evidence="4">
    <location>
        <begin position="73"/>
        <end position="76"/>
    </location>
</feature>
<feature type="strand" evidence="4">
    <location>
        <begin position="77"/>
        <end position="82"/>
    </location>
</feature>
<feature type="helix" evidence="4">
    <location>
        <begin position="89"/>
        <end position="95"/>
    </location>
</feature>
<feature type="turn" evidence="4">
    <location>
        <begin position="96"/>
        <end position="98"/>
    </location>
</feature>
<feature type="helix" evidence="4">
    <location>
        <begin position="104"/>
        <end position="113"/>
    </location>
</feature>
<feature type="strand" evidence="4">
    <location>
        <begin position="114"/>
        <end position="116"/>
    </location>
</feature>
<feature type="helix" evidence="4">
    <location>
        <begin position="118"/>
        <end position="124"/>
    </location>
</feature>
<feature type="helix" evidence="4">
    <location>
        <begin position="127"/>
        <end position="133"/>
    </location>
</feature>
<feature type="strand" evidence="4">
    <location>
        <begin position="135"/>
        <end position="143"/>
    </location>
</feature>
<feature type="strand" evidence="4">
    <location>
        <begin position="150"/>
        <end position="154"/>
    </location>
</feature>
<feature type="strand" evidence="4">
    <location>
        <begin position="159"/>
        <end position="164"/>
    </location>
</feature>
<feature type="strand" evidence="4">
    <location>
        <begin position="171"/>
        <end position="180"/>
    </location>
</feature>
<feature type="helix" evidence="4">
    <location>
        <begin position="182"/>
        <end position="188"/>
    </location>
</feature>
<feature type="helix" evidence="4">
    <location>
        <begin position="190"/>
        <end position="199"/>
    </location>
</feature>
<feature type="turn" evidence="5">
    <location>
        <begin position="200"/>
        <end position="203"/>
    </location>
</feature>
<feature type="strand" evidence="4">
    <location>
        <begin position="208"/>
        <end position="210"/>
    </location>
</feature>
<reference key="1">
    <citation type="submission" date="1995-07" db="EMBL/GenBank/DDBJ databases">
        <authorList>
            <person name="Boves H."/>
            <person name="Dittrich W."/>
            <person name="Mintert U."/>
            <person name="Lottspeich F."/>
            <person name="Gerisch G."/>
            <person name="Faix J."/>
        </authorList>
    </citation>
    <scope>NUCLEOTIDE SEQUENCE [MRNA]</scope>
    <source>
        <strain>AX3</strain>
    </source>
</reference>
<reference key="2">
    <citation type="journal article" date="2005" name="Nature">
        <title>The genome of the social amoeba Dictyostelium discoideum.</title>
        <authorList>
            <person name="Eichinger L."/>
            <person name="Pachebat J.A."/>
            <person name="Gloeckner G."/>
            <person name="Rajandream M.A."/>
            <person name="Sucgang R."/>
            <person name="Berriman M."/>
            <person name="Song J."/>
            <person name="Olsen R."/>
            <person name="Szafranski K."/>
            <person name="Xu Q."/>
            <person name="Tunggal B."/>
            <person name="Kummerfeld S."/>
            <person name="Madera M."/>
            <person name="Konfortov B.A."/>
            <person name="Rivero F."/>
            <person name="Bankier A.T."/>
            <person name="Lehmann R."/>
            <person name="Hamlin N."/>
            <person name="Davies R."/>
            <person name="Gaudet P."/>
            <person name="Fey P."/>
            <person name="Pilcher K."/>
            <person name="Chen G."/>
            <person name="Saunders D."/>
            <person name="Sodergren E.J."/>
            <person name="Davis P."/>
            <person name="Kerhornou A."/>
            <person name="Nie X."/>
            <person name="Hall N."/>
            <person name="Anjard C."/>
            <person name="Hemphill L."/>
            <person name="Bason N."/>
            <person name="Farbrother P."/>
            <person name="Desany B."/>
            <person name="Just E."/>
            <person name="Morio T."/>
            <person name="Rost R."/>
            <person name="Churcher C.M."/>
            <person name="Cooper J."/>
            <person name="Haydock S."/>
            <person name="van Driessche N."/>
            <person name="Cronin A."/>
            <person name="Goodhead I."/>
            <person name="Muzny D.M."/>
            <person name="Mourier T."/>
            <person name="Pain A."/>
            <person name="Lu M."/>
            <person name="Harper D."/>
            <person name="Lindsay R."/>
            <person name="Hauser H."/>
            <person name="James K.D."/>
            <person name="Quiles M."/>
            <person name="Madan Babu M."/>
            <person name="Saito T."/>
            <person name="Buchrieser C."/>
            <person name="Wardroper A."/>
            <person name="Felder M."/>
            <person name="Thangavelu M."/>
            <person name="Johnson D."/>
            <person name="Knights A."/>
            <person name="Loulseged H."/>
            <person name="Mungall K.L."/>
            <person name="Oliver K."/>
            <person name="Price C."/>
            <person name="Quail M.A."/>
            <person name="Urushihara H."/>
            <person name="Hernandez J."/>
            <person name="Rabbinowitsch E."/>
            <person name="Steffen D."/>
            <person name="Sanders M."/>
            <person name="Ma J."/>
            <person name="Kohara Y."/>
            <person name="Sharp S."/>
            <person name="Simmonds M.N."/>
            <person name="Spiegler S."/>
            <person name="Tivey A."/>
            <person name="Sugano S."/>
            <person name="White B."/>
            <person name="Walker D."/>
            <person name="Woodward J.R."/>
            <person name="Winckler T."/>
            <person name="Tanaka Y."/>
            <person name="Shaulsky G."/>
            <person name="Schleicher M."/>
            <person name="Weinstock G.M."/>
            <person name="Rosenthal A."/>
            <person name="Cox E.C."/>
            <person name="Chisholm R.L."/>
            <person name="Gibbs R.A."/>
            <person name="Loomis W.F."/>
            <person name="Platzer M."/>
            <person name="Kay R.R."/>
            <person name="Williams J.G."/>
            <person name="Dear P.H."/>
            <person name="Noegel A.A."/>
            <person name="Barrell B.G."/>
            <person name="Kuspa A."/>
        </authorList>
    </citation>
    <scope>NUCLEOTIDE SEQUENCE [LARGE SCALE GENOMIC DNA]</scope>
    <source>
        <strain>AX4</strain>
    </source>
</reference>
<reference key="3">
    <citation type="journal article" date="2006" name="J. Proteome Res.">
        <title>Identification of novel centrosomal proteins in Dictyostelium discoideum by comparative proteomic approaches.</title>
        <authorList>
            <person name="Reinders Y."/>
            <person name="Schulz I."/>
            <person name="Graef R."/>
            <person name="Sickmann A."/>
        </authorList>
    </citation>
    <scope>IDENTIFICATION BY MASS SPECTROMETRY [LARGE SCALE ANALYSIS]</scope>
</reference>
<reference key="4">
    <citation type="journal article" date="2006" name="Mol. Cell. Proteomics">
        <title>Proteomics fingerprinting of phagosome maturation and evidence for the role of a Galpha during uptake.</title>
        <authorList>
            <person name="Gotthardt D."/>
            <person name="Blancheteau V."/>
            <person name="Bosserhoff A."/>
            <person name="Ruppert T."/>
            <person name="Delorenzi M."/>
            <person name="Soldati T."/>
        </authorList>
    </citation>
    <scope>IDENTIFICATION BY MASS SPECTROMETRY [LARGE SCALE ANALYSIS]</scope>
    <source>
        <strain>AX2</strain>
    </source>
</reference>
<gene>
    <name type="primary">hspD</name>
    <name type="synonym">hsc90</name>
    <name type="synonym">hsp90</name>
    <name type="ORF">DDB_G0267400</name>
</gene>